<gene>
    <name evidence="1" type="primary">plsX</name>
    <name type="ordered locus">Sbal_1716</name>
</gene>
<proteinExistence type="inferred from homology"/>
<comment type="function">
    <text evidence="1">Catalyzes the reversible formation of acyl-phosphate (acyl-PO(4)) from acyl-[acyl-carrier-protein] (acyl-ACP). This enzyme utilizes acyl-ACP as fatty acyl donor, but not acyl-CoA.</text>
</comment>
<comment type="catalytic activity">
    <reaction evidence="1">
        <text>a fatty acyl-[ACP] + phosphate = an acyl phosphate + holo-[ACP]</text>
        <dbReference type="Rhea" id="RHEA:42292"/>
        <dbReference type="Rhea" id="RHEA-COMP:9685"/>
        <dbReference type="Rhea" id="RHEA-COMP:14125"/>
        <dbReference type="ChEBI" id="CHEBI:43474"/>
        <dbReference type="ChEBI" id="CHEBI:59918"/>
        <dbReference type="ChEBI" id="CHEBI:64479"/>
        <dbReference type="ChEBI" id="CHEBI:138651"/>
        <dbReference type="EC" id="2.3.1.274"/>
    </reaction>
</comment>
<comment type="pathway">
    <text evidence="1">Lipid metabolism; phospholipid metabolism.</text>
</comment>
<comment type="subunit">
    <text evidence="1">Homodimer. Probably interacts with PlsY.</text>
</comment>
<comment type="subcellular location">
    <subcellularLocation>
        <location evidence="1">Cytoplasm</location>
    </subcellularLocation>
    <text evidence="1">Associated with the membrane possibly through PlsY.</text>
</comment>
<comment type="similarity">
    <text evidence="1">Belongs to the PlsX family.</text>
</comment>
<accession>A3D3B2</accession>
<sequence>MTNLTLALDAMGGDHGPHVTVPAALRALQLHSFLKIILVGDKTEIDVYLRQAEANLLSRIEIIHTDEVVSMSDRPVHALRTRKNSSMRLAIELVRDDRAQACVSAGNTGALMAMAKVLLKTLPGVDRPALVSCLPAVTQKPVYLLDLGANISCDSETLFQFAVMGSVLCEAVDKKSRPKVALLNVGIEEIKGNDQVQQAAQLLQHTDQINYTGFIEGDEIYSGNVDVIVCDGFVGNITLKTSEGIAKLLVHQLKRGLTQGLFVRFLAKLIAPRIQAVLSQMNPDHYNGASLIGLRGIVVKSHGNADETAYLQAISLAVTEAQRRLPEMIKDRLESILLDINN</sequence>
<name>PLSX_SHEB5</name>
<organism>
    <name type="scientific">Shewanella baltica (strain OS155 / ATCC BAA-1091)</name>
    <dbReference type="NCBI Taxonomy" id="325240"/>
    <lineage>
        <taxon>Bacteria</taxon>
        <taxon>Pseudomonadati</taxon>
        <taxon>Pseudomonadota</taxon>
        <taxon>Gammaproteobacteria</taxon>
        <taxon>Alteromonadales</taxon>
        <taxon>Shewanellaceae</taxon>
        <taxon>Shewanella</taxon>
    </lineage>
</organism>
<keyword id="KW-0963">Cytoplasm</keyword>
<keyword id="KW-0444">Lipid biosynthesis</keyword>
<keyword id="KW-0443">Lipid metabolism</keyword>
<keyword id="KW-0594">Phospholipid biosynthesis</keyword>
<keyword id="KW-1208">Phospholipid metabolism</keyword>
<keyword id="KW-1185">Reference proteome</keyword>
<keyword id="KW-0808">Transferase</keyword>
<feature type="chain" id="PRO_1000001824" description="Phosphate acyltransferase">
    <location>
        <begin position="1"/>
        <end position="342"/>
    </location>
</feature>
<dbReference type="EC" id="2.3.1.274" evidence="1"/>
<dbReference type="EMBL" id="CP000563">
    <property type="protein sequence ID" value="ABN61225.1"/>
    <property type="molecule type" value="Genomic_DNA"/>
</dbReference>
<dbReference type="RefSeq" id="WP_006081227.1">
    <property type="nucleotide sequence ID" value="NC_009052.1"/>
</dbReference>
<dbReference type="SMR" id="A3D3B2"/>
<dbReference type="STRING" id="325240.Sbal_1716"/>
<dbReference type="GeneID" id="11771973"/>
<dbReference type="KEGG" id="sbl:Sbal_1716"/>
<dbReference type="HOGENOM" id="CLU_039379_1_0_6"/>
<dbReference type="OrthoDB" id="9806408at2"/>
<dbReference type="UniPathway" id="UPA00085"/>
<dbReference type="Proteomes" id="UP000001557">
    <property type="component" value="Chromosome"/>
</dbReference>
<dbReference type="GO" id="GO:0005737">
    <property type="term" value="C:cytoplasm"/>
    <property type="evidence" value="ECO:0007669"/>
    <property type="project" value="UniProtKB-SubCell"/>
</dbReference>
<dbReference type="GO" id="GO:0043811">
    <property type="term" value="F:phosphate:acyl-[acyl carrier protein] acyltransferase activity"/>
    <property type="evidence" value="ECO:0007669"/>
    <property type="project" value="UniProtKB-UniRule"/>
</dbReference>
<dbReference type="GO" id="GO:0006633">
    <property type="term" value="P:fatty acid biosynthetic process"/>
    <property type="evidence" value="ECO:0007669"/>
    <property type="project" value="UniProtKB-UniRule"/>
</dbReference>
<dbReference type="GO" id="GO:0008654">
    <property type="term" value="P:phospholipid biosynthetic process"/>
    <property type="evidence" value="ECO:0007669"/>
    <property type="project" value="UniProtKB-KW"/>
</dbReference>
<dbReference type="Gene3D" id="3.40.718.10">
    <property type="entry name" value="Isopropylmalate Dehydrogenase"/>
    <property type="match status" value="1"/>
</dbReference>
<dbReference type="HAMAP" id="MF_00019">
    <property type="entry name" value="PlsX"/>
    <property type="match status" value="1"/>
</dbReference>
<dbReference type="InterPro" id="IPR003664">
    <property type="entry name" value="FA_synthesis"/>
</dbReference>
<dbReference type="InterPro" id="IPR012281">
    <property type="entry name" value="Phospholipid_synth_PlsX-like"/>
</dbReference>
<dbReference type="NCBIfam" id="TIGR00182">
    <property type="entry name" value="plsX"/>
    <property type="match status" value="1"/>
</dbReference>
<dbReference type="PANTHER" id="PTHR30100">
    <property type="entry name" value="FATTY ACID/PHOSPHOLIPID SYNTHESIS PROTEIN PLSX"/>
    <property type="match status" value="1"/>
</dbReference>
<dbReference type="PANTHER" id="PTHR30100:SF1">
    <property type="entry name" value="PHOSPHATE ACYLTRANSFERASE"/>
    <property type="match status" value="1"/>
</dbReference>
<dbReference type="Pfam" id="PF02504">
    <property type="entry name" value="FA_synthesis"/>
    <property type="match status" value="1"/>
</dbReference>
<dbReference type="PIRSF" id="PIRSF002465">
    <property type="entry name" value="Phsphlp_syn_PlsX"/>
    <property type="match status" value="1"/>
</dbReference>
<dbReference type="SUPFAM" id="SSF53659">
    <property type="entry name" value="Isocitrate/Isopropylmalate dehydrogenase-like"/>
    <property type="match status" value="1"/>
</dbReference>
<evidence type="ECO:0000255" key="1">
    <source>
        <dbReference type="HAMAP-Rule" id="MF_00019"/>
    </source>
</evidence>
<protein>
    <recommendedName>
        <fullName evidence="1">Phosphate acyltransferase</fullName>
        <ecNumber evidence="1">2.3.1.274</ecNumber>
    </recommendedName>
    <alternativeName>
        <fullName evidence="1">Acyl-ACP phosphotransacylase</fullName>
    </alternativeName>
    <alternativeName>
        <fullName evidence="1">Acyl-[acyl-carrier-protein]--phosphate acyltransferase</fullName>
    </alternativeName>
    <alternativeName>
        <fullName evidence="1">Phosphate-acyl-ACP acyltransferase</fullName>
    </alternativeName>
</protein>
<reference key="1">
    <citation type="submission" date="2007-02" db="EMBL/GenBank/DDBJ databases">
        <title>Complete sequence of chromosome of Shewanella baltica OS155.</title>
        <authorList>
            <consortium name="US DOE Joint Genome Institute"/>
            <person name="Copeland A."/>
            <person name="Lucas S."/>
            <person name="Lapidus A."/>
            <person name="Barry K."/>
            <person name="Detter J.C."/>
            <person name="Glavina del Rio T."/>
            <person name="Hammon N."/>
            <person name="Israni S."/>
            <person name="Dalin E."/>
            <person name="Tice H."/>
            <person name="Pitluck S."/>
            <person name="Sims D.R."/>
            <person name="Brettin T."/>
            <person name="Bruce D."/>
            <person name="Han C."/>
            <person name="Tapia R."/>
            <person name="Brainard J."/>
            <person name="Schmutz J."/>
            <person name="Larimer F."/>
            <person name="Land M."/>
            <person name="Hauser L."/>
            <person name="Kyrpides N."/>
            <person name="Mikhailova N."/>
            <person name="Brettar I."/>
            <person name="Klappenbach J."/>
            <person name="Konstantinidis K."/>
            <person name="Rodrigues J."/>
            <person name="Tiedje J."/>
            <person name="Richardson P."/>
        </authorList>
    </citation>
    <scope>NUCLEOTIDE SEQUENCE [LARGE SCALE GENOMIC DNA]</scope>
    <source>
        <strain>OS155 / ATCC BAA-1091</strain>
    </source>
</reference>